<feature type="chain" id="PRO_1000048867" description="tRNA modification GTPase MnmE">
    <location>
        <begin position="1"/>
        <end position="445"/>
    </location>
</feature>
<feature type="domain" description="TrmE-type G">
    <location>
        <begin position="215"/>
        <end position="371"/>
    </location>
</feature>
<feature type="binding site" evidence="1">
    <location>
        <position position="20"/>
    </location>
    <ligand>
        <name>(6S)-5-formyl-5,6,7,8-tetrahydrofolate</name>
        <dbReference type="ChEBI" id="CHEBI:57457"/>
    </ligand>
</feature>
<feature type="binding site" evidence="1">
    <location>
        <position position="79"/>
    </location>
    <ligand>
        <name>(6S)-5-formyl-5,6,7,8-tetrahydrofolate</name>
        <dbReference type="ChEBI" id="CHEBI:57457"/>
    </ligand>
</feature>
<feature type="binding site" evidence="1">
    <location>
        <position position="119"/>
    </location>
    <ligand>
        <name>(6S)-5-formyl-5,6,7,8-tetrahydrofolate</name>
        <dbReference type="ChEBI" id="CHEBI:57457"/>
    </ligand>
</feature>
<feature type="binding site" evidence="1">
    <location>
        <begin position="225"/>
        <end position="230"/>
    </location>
    <ligand>
        <name>GTP</name>
        <dbReference type="ChEBI" id="CHEBI:37565"/>
    </ligand>
</feature>
<feature type="binding site" evidence="1">
    <location>
        <position position="225"/>
    </location>
    <ligand>
        <name>K(+)</name>
        <dbReference type="ChEBI" id="CHEBI:29103"/>
    </ligand>
</feature>
<feature type="binding site" evidence="1">
    <location>
        <position position="229"/>
    </location>
    <ligand>
        <name>Mg(2+)</name>
        <dbReference type="ChEBI" id="CHEBI:18420"/>
    </ligand>
</feature>
<feature type="binding site" evidence="1">
    <location>
        <begin position="244"/>
        <end position="250"/>
    </location>
    <ligand>
        <name>GTP</name>
        <dbReference type="ChEBI" id="CHEBI:37565"/>
    </ligand>
</feature>
<feature type="binding site" evidence="1">
    <location>
        <position position="244"/>
    </location>
    <ligand>
        <name>K(+)</name>
        <dbReference type="ChEBI" id="CHEBI:29103"/>
    </ligand>
</feature>
<feature type="binding site" evidence="1">
    <location>
        <position position="246"/>
    </location>
    <ligand>
        <name>K(+)</name>
        <dbReference type="ChEBI" id="CHEBI:29103"/>
    </ligand>
</feature>
<feature type="binding site" evidence="1">
    <location>
        <position position="249"/>
    </location>
    <ligand>
        <name>K(+)</name>
        <dbReference type="ChEBI" id="CHEBI:29103"/>
    </ligand>
</feature>
<feature type="binding site" evidence="1">
    <location>
        <position position="250"/>
    </location>
    <ligand>
        <name>Mg(2+)</name>
        <dbReference type="ChEBI" id="CHEBI:18420"/>
    </ligand>
</feature>
<feature type="binding site" evidence="1">
    <location>
        <begin position="269"/>
        <end position="272"/>
    </location>
    <ligand>
        <name>GTP</name>
        <dbReference type="ChEBI" id="CHEBI:37565"/>
    </ligand>
</feature>
<feature type="binding site" evidence="1">
    <location>
        <position position="445"/>
    </location>
    <ligand>
        <name>(6S)-5-formyl-5,6,7,8-tetrahydrofolate</name>
        <dbReference type="ChEBI" id="CHEBI:57457"/>
    </ligand>
</feature>
<organism>
    <name type="scientific">Rickettsia rickettsii (strain Sheila Smith)</name>
    <dbReference type="NCBI Taxonomy" id="392021"/>
    <lineage>
        <taxon>Bacteria</taxon>
        <taxon>Pseudomonadati</taxon>
        <taxon>Pseudomonadota</taxon>
        <taxon>Alphaproteobacteria</taxon>
        <taxon>Rickettsiales</taxon>
        <taxon>Rickettsiaceae</taxon>
        <taxon>Rickettsieae</taxon>
        <taxon>Rickettsia</taxon>
        <taxon>spotted fever group</taxon>
    </lineage>
</organism>
<proteinExistence type="inferred from homology"/>
<accession>A8GTM1</accession>
<sequence>METIFAQSSAFGKAGVAVFRISGPKSLEVLQLLTGRKDFKSRLMYYQQITVPETKELIDNVMVVYFKSPGSFTGEDVVEIHTHGSKAISIMLTNALLNIAGIRLAEAGEFTKRAFLNNKLDLTAAEGIADLINAETIMQHKQAIRQASGKLEALYNNWRSQLLKILSLLEAYIDFPDEDIPDTVLNEVTNTHTILVNTISEYLNDNRKGELLRSGLKLAIIGPPNVGKSSLLNFLMQRDIAIVSNIAGTTRDIIEGHLDIGGYPIILQDTAGIREESSDIIEQEGIKRAINSAKTADIKIIMFDAEKLDSSINEDIINLIDENTITIINKIDLIEASKIFSIENKYKCLRVSVKNNIALSSILKNIENIAENMAGFTETPYITNQRHRNYLQQALSHLTAFSLDNDLVLATEDIRMTARCIGAITGVINVEEILGEIFKNFCIGK</sequence>
<gene>
    <name evidence="1" type="primary">mnmE</name>
    <name evidence="1" type="synonym">trmE</name>
    <name type="ordered locus">A1G_06465</name>
</gene>
<name>MNME_RICRS</name>
<keyword id="KW-0963">Cytoplasm</keyword>
<keyword id="KW-0342">GTP-binding</keyword>
<keyword id="KW-0378">Hydrolase</keyword>
<keyword id="KW-0460">Magnesium</keyword>
<keyword id="KW-0479">Metal-binding</keyword>
<keyword id="KW-0547">Nucleotide-binding</keyword>
<keyword id="KW-0630">Potassium</keyword>
<keyword id="KW-0819">tRNA processing</keyword>
<dbReference type="EC" id="3.6.-.-" evidence="1"/>
<dbReference type="EMBL" id="CP000848">
    <property type="protein sequence ID" value="ABV76746.1"/>
    <property type="molecule type" value="Genomic_DNA"/>
</dbReference>
<dbReference type="RefSeq" id="WP_012151294.1">
    <property type="nucleotide sequence ID" value="NZ_CP121767.1"/>
</dbReference>
<dbReference type="SMR" id="A8GTM1"/>
<dbReference type="GeneID" id="79937796"/>
<dbReference type="KEGG" id="rri:A1G_06465"/>
<dbReference type="HOGENOM" id="CLU_019624_3_1_5"/>
<dbReference type="Proteomes" id="UP000006832">
    <property type="component" value="Chromosome"/>
</dbReference>
<dbReference type="GO" id="GO:0005737">
    <property type="term" value="C:cytoplasm"/>
    <property type="evidence" value="ECO:0007669"/>
    <property type="project" value="UniProtKB-SubCell"/>
</dbReference>
<dbReference type="GO" id="GO:0005525">
    <property type="term" value="F:GTP binding"/>
    <property type="evidence" value="ECO:0007669"/>
    <property type="project" value="UniProtKB-UniRule"/>
</dbReference>
<dbReference type="GO" id="GO:0003924">
    <property type="term" value="F:GTPase activity"/>
    <property type="evidence" value="ECO:0007669"/>
    <property type="project" value="UniProtKB-UniRule"/>
</dbReference>
<dbReference type="GO" id="GO:0046872">
    <property type="term" value="F:metal ion binding"/>
    <property type="evidence" value="ECO:0007669"/>
    <property type="project" value="UniProtKB-KW"/>
</dbReference>
<dbReference type="GO" id="GO:0030488">
    <property type="term" value="P:tRNA methylation"/>
    <property type="evidence" value="ECO:0007669"/>
    <property type="project" value="TreeGrafter"/>
</dbReference>
<dbReference type="GO" id="GO:0002098">
    <property type="term" value="P:tRNA wobble uridine modification"/>
    <property type="evidence" value="ECO:0007669"/>
    <property type="project" value="TreeGrafter"/>
</dbReference>
<dbReference type="CDD" id="cd04164">
    <property type="entry name" value="trmE"/>
    <property type="match status" value="1"/>
</dbReference>
<dbReference type="CDD" id="cd14858">
    <property type="entry name" value="TrmE_N"/>
    <property type="match status" value="1"/>
</dbReference>
<dbReference type="FunFam" id="3.30.1360.120:FF:000007">
    <property type="entry name" value="tRNA modification GTPase GTPBP3, mitochondrial"/>
    <property type="match status" value="1"/>
</dbReference>
<dbReference type="Gene3D" id="3.40.50.300">
    <property type="entry name" value="P-loop containing nucleotide triphosphate hydrolases"/>
    <property type="match status" value="1"/>
</dbReference>
<dbReference type="Gene3D" id="3.30.1360.120">
    <property type="entry name" value="Probable tRNA modification gtpase trme, domain 1"/>
    <property type="match status" value="1"/>
</dbReference>
<dbReference type="Gene3D" id="1.20.120.430">
    <property type="entry name" value="tRNA modification GTPase MnmE domain 2"/>
    <property type="match status" value="1"/>
</dbReference>
<dbReference type="HAMAP" id="MF_00379">
    <property type="entry name" value="GTPase_MnmE"/>
    <property type="match status" value="1"/>
</dbReference>
<dbReference type="InterPro" id="IPR031168">
    <property type="entry name" value="G_TrmE"/>
</dbReference>
<dbReference type="InterPro" id="IPR006073">
    <property type="entry name" value="GTP-bd"/>
</dbReference>
<dbReference type="InterPro" id="IPR018948">
    <property type="entry name" value="GTP-bd_TrmE_N"/>
</dbReference>
<dbReference type="InterPro" id="IPR004520">
    <property type="entry name" value="GTPase_MnmE"/>
</dbReference>
<dbReference type="InterPro" id="IPR027368">
    <property type="entry name" value="MnmE_dom2"/>
</dbReference>
<dbReference type="InterPro" id="IPR025867">
    <property type="entry name" value="MnmE_helical"/>
</dbReference>
<dbReference type="InterPro" id="IPR027417">
    <property type="entry name" value="P-loop_NTPase"/>
</dbReference>
<dbReference type="InterPro" id="IPR005225">
    <property type="entry name" value="Small_GTP-bd"/>
</dbReference>
<dbReference type="InterPro" id="IPR027266">
    <property type="entry name" value="TrmE/GcvT_dom1"/>
</dbReference>
<dbReference type="NCBIfam" id="TIGR00450">
    <property type="entry name" value="mnmE_trmE_thdF"/>
    <property type="match status" value="1"/>
</dbReference>
<dbReference type="NCBIfam" id="NF003661">
    <property type="entry name" value="PRK05291.1-3"/>
    <property type="match status" value="1"/>
</dbReference>
<dbReference type="NCBIfam" id="TIGR00231">
    <property type="entry name" value="small_GTP"/>
    <property type="match status" value="1"/>
</dbReference>
<dbReference type="PANTHER" id="PTHR42714">
    <property type="entry name" value="TRNA MODIFICATION GTPASE GTPBP3"/>
    <property type="match status" value="1"/>
</dbReference>
<dbReference type="PANTHER" id="PTHR42714:SF2">
    <property type="entry name" value="TRNA MODIFICATION GTPASE GTPBP3, MITOCHONDRIAL"/>
    <property type="match status" value="1"/>
</dbReference>
<dbReference type="Pfam" id="PF01926">
    <property type="entry name" value="MMR_HSR1"/>
    <property type="match status" value="1"/>
</dbReference>
<dbReference type="Pfam" id="PF12631">
    <property type="entry name" value="MnmE_helical"/>
    <property type="match status" value="1"/>
</dbReference>
<dbReference type="Pfam" id="PF10396">
    <property type="entry name" value="TrmE_N"/>
    <property type="match status" value="1"/>
</dbReference>
<dbReference type="SUPFAM" id="SSF52540">
    <property type="entry name" value="P-loop containing nucleoside triphosphate hydrolases"/>
    <property type="match status" value="1"/>
</dbReference>
<dbReference type="SUPFAM" id="SSF116878">
    <property type="entry name" value="TrmE connector domain"/>
    <property type="match status" value="1"/>
</dbReference>
<dbReference type="PROSITE" id="PS51709">
    <property type="entry name" value="G_TRME"/>
    <property type="match status" value="1"/>
</dbReference>
<comment type="function">
    <text evidence="1">Exhibits a very high intrinsic GTPase hydrolysis rate. Involved in the addition of a carboxymethylaminomethyl (cmnm) group at the wobble position (U34) of certain tRNAs, forming tRNA-cmnm(5)s(2)U34.</text>
</comment>
<comment type="cofactor">
    <cofactor evidence="1">
        <name>K(+)</name>
        <dbReference type="ChEBI" id="CHEBI:29103"/>
    </cofactor>
    <text evidence="1">Binds 1 potassium ion per subunit.</text>
</comment>
<comment type="subunit">
    <text evidence="1">Homodimer. Heterotetramer of two MnmE and two MnmG subunits.</text>
</comment>
<comment type="subcellular location">
    <subcellularLocation>
        <location evidence="1">Cytoplasm</location>
    </subcellularLocation>
</comment>
<comment type="similarity">
    <text evidence="1">Belongs to the TRAFAC class TrmE-Era-EngA-EngB-Septin-like GTPase superfamily. TrmE GTPase family.</text>
</comment>
<reference key="1">
    <citation type="submission" date="2007-09" db="EMBL/GenBank/DDBJ databases">
        <title>Complete genome sequence of Rickettsia rickettsii.</title>
        <authorList>
            <person name="Madan A."/>
            <person name="Fahey J."/>
            <person name="Helton E."/>
            <person name="Ketteman M."/>
            <person name="Madan A."/>
            <person name="Rodrigues S."/>
            <person name="Sanchez A."/>
            <person name="Dasch G."/>
            <person name="Eremeeva M."/>
        </authorList>
    </citation>
    <scope>NUCLEOTIDE SEQUENCE [LARGE SCALE GENOMIC DNA]</scope>
    <source>
        <strain>Sheila Smith</strain>
    </source>
</reference>
<evidence type="ECO:0000255" key="1">
    <source>
        <dbReference type="HAMAP-Rule" id="MF_00379"/>
    </source>
</evidence>
<protein>
    <recommendedName>
        <fullName evidence="1">tRNA modification GTPase MnmE</fullName>
        <ecNumber evidence="1">3.6.-.-</ecNumber>
    </recommendedName>
</protein>